<evidence type="ECO:0000255" key="1">
    <source>
        <dbReference type="HAMAP-Rule" id="MF_00725"/>
    </source>
</evidence>
<comment type="function">
    <text evidence="1">Functions in complex with FlhC as a master transcriptional regulator that regulates transcription of several flagellar and non-flagellar operons by binding to their promoter region. Activates expression of class 2 flagellar genes, including fliA, which is a flagellum-specific sigma factor that turns on the class 3 genes. Also regulates genes whose products function in a variety of physiological pathways.</text>
</comment>
<comment type="subunit">
    <text evidence="1">Homodimer; disulfide-linked. Forms a heterohexamer composed of two FlhC and four FlhD subunits. Each FlhC binds a FlhD dimer, forming a heterotrimer, and a hexamer assembles by dimerization of two heterotrimers.</text>
</comment>
<comment type="subcellular location">
    <subcellularLocation>
        <location evidence="1">Cytoplasm</location>
    </subcellularLocation>
</comment>
<comment type="domain">
    <text evidence="1">The C-terminal region contains a putative helix-turn-helix (HTH) motif, suggesting that this region may bind DNA.</text>
</comment>
<comment type="similarity">
    <text evidence="1">Belongs to the FlhD family.</text>
</comment>
<accession>B2AI46</accession>
<sequence length="105" mass="11827">MESSEVLQEIREVNLAYLLLAQRLVRENQVEAMFRLGVSKEIADILAKLTSAQLVKLAASNMVLCRFRFDDHALLSTLTHTAKSHDMQQIHAAILLARQPVESLN</sequence>
<organism>
    <name type="scientific">Cupriavidus taiwanensis (strain DSM 17343 / BCRC 17206 / CCUG 44338 / CIP 107171 / LMG 19424 / R1)</name>
    <name type="common">Ralstonia taiwanensis (strain LMG 19424)</name>
    <dbReference type="NCBI Taxonomy" id="977880"/>
    <lineage>
        <taxon>Bacteria</taxon>
        <taxon>Pseudomonadati</taxon>
        <taxon>Pseudomonadota</taxon>
        <taxon>Betaproteobacteria</taxon>
        <taxon>Burkholderiales</taxon>
        <taxon>Burkholderiaceae</taxon>
        <taxon>Cupriavidus</taxon>
    </lineage>
</organism>
<proteinExistence type="inferred from homology"/>
<name>FLHD_CUPTR</name>
<dbReference type="EMBL" id="CU633750">
    <property type="protein sequence ID" value="CAP63445.1"/>
    <property type="molecule type" value="Genomic_DNA"/>
</dbReference>
<dbReference type="RefSeq" id="WP_010812713.1">
    <property type="nucleotide sequence ID" value="NC_010530.1"/>
</dbReference>
<dbReference type="SMR" id="B2AI46"/>
<dbReference type="GeneID" id="34305896"/>
<dbReference type="KEGG" id="cti:RALTA_B0245"/>
<dbReference type="eggNOG" id="ENOG5031P80">
    <property type="taxonomic scope" value="Bacteria"/>
</dbReference>
<dbReference type="HOGENOM" id="CLU_144160_1_0_4"/>
<dbReference type="BioCyc" id="CTAI977880:RALTA_RS16970-MONOMER"/>
<dbReference type="Proteomes" id="UP000001692">
    <property type="component" value="Chromosome 2"/>
</dbReference>
<dbReference type="GO" id="GO:0005737">
    <property type="term" value="C:cytoplasm"/>
    <property type="evidence" value="ECO:0007669"/>
    <property type="project" value="UniProtKB-SubCell"/>
</dbReference>
<dbReference type="GO" id="GO:0003677">
    <property type="term" value="F:DNA binding"/>
    <property type="evidence" value="ECO:0007669"/>
    <property type="project" value="UniProtKB-UniRule"/>
</dbReference>
<dbReference type="GO" id="GO:0044780">
    <property type="term" value="P:bacterial-type flagellum assembly"/>
    <property type="evidence" value="ECO:0007669"/>
    <property type="project" value="InterPro"/>
</dbReference>
<dbReference type="GO" id="GO:0045893">
    <property type="term" value="P:positive regulation of DNA-templated transcription"/>
    <property type="evidence" value="ECO:0007669"/>
    <property type="project" value="InterPro"/>
</dbReference>
<dbReference type="GO" id="GO:1902208">
    <property type="term" value="P:regulation of bacterial-type flagellum assembly"/>
    <property type="evidence" value="ECO:0007669"/>
    <property type="project" value="UniProtKB-UniRule"/>
</dbReference>
<dbReference type="Gene3D" id="1.10.4000.10">
    <property type="entry name" value="Flagellar transcriptional activator FlhD"/>
    <property type="match status" value="1"/>
</dbReference>
<dbReference type="HAMAP" id="MF_00725">
    <property type="entry name" value="FlhD"/>
    <property type="match status" value="1"/>
</dbReference>
<dbReference type="InterPro" id="IPR023559">
    <property type="entry name" value="Flagellar_FlhD"/>
</dbReference>
<dbReference type="InterPro" id="IPR036194">
    <property type="entry name" value="FlhD_sf"/>
</dbReference>
<dbReference type="NCBIfam" id="NF002783">
    <property type="entry name" value="PRK02909.1-1"/>
    <property type="match status" value="1"/>
</dbReference>
<dbReference type="Pfam" id="PF05247">
    <property type="entry name" value="FlhD"/>
    <property type="match status" value="1"/>
</dbReference>
<dbReference type="SUPFAM" id="SSF63592">
    <property type="entry name" value="Flagellar transcriptional activator FlhD"/>
    <property type="match status" value="1"/>
</dbReference>
<reference key="1">
    <citation type="journal article" date="2008" name="Genome Res.">
        <title>Genome sequence of the beta-rhizobium Cupriavidus taiwanensis and comparative genomics of rhizobia.</title>
        <authorList>
            <person name="Amadou C."/>
            <person name="Pascal G."/>
            <person name="Mangenot S."/>
            <person name="Glew M."/>
            <person name="Bontemps C."/>
            <person name="Capela D."/>
            <person name="Carrere S."/>
            <person name="Cruveiller S."/>
            <person name="Dossat C."/>
            <person name="Lajus A."/>
            <person name="Marchetti M."/>
            <person name="Poinsot V."/>
            <person name="Rouy Z."/>
            <person name="Servin B."/>
            <person name="Saad M."/>
            <person name="Schenowitz C."/>
            <person name="Barbe V."/>
            <person name="Batut J."/>
            <person name="Medigue C."/>
            <person name="Masson-Boivin C."/>
        </authorList>
    </citation>
    <scope>NUCLEOTIDE SEQUENCE [LARGE SCALE GENOMIC DNA]</scope>
    <source>
        <strain>DSM 17343 / BCRC 17206 / CCUG 44338 / CIP 107171 / LMG 19424 / R1</strain>
    </source>
</reference>
<gene>
    <name evidence="1" type="primary">flhD</name>
    <name type="ordered locus">RALTA_B0245</name>
</gene>
<keyword id="KW-0010">Activator</keyword>
<keyword id="KW-1005">Bacterial flagellum biogenesis</keyword>
<keyword id="KW-0963">Cytoplasm</keyword>
<keyword id="KW-1015">Disulfide bond</keyword>
<keyword id="KW-0238">DNA-binding</keyword>
<keyword id="KW-0804">Transcription</keyword>
<keyword id="KW-0805">Transcription regulation</keyword>
<protein>
    <recommendedName>
        <fullName evidence="1">Flagellar transcriptional regulator FlhD</fullName>
    </recommendedName>
</protein>
<feature type="chain" id="PRO_1000132678" description="Flagellar transcriptional regulator FlhD">
    <location>
        <begin position="1"/>
        <end position="105"/>
    </location>
</feature>
<feature type="disulfide bond" description="Interchain" evidence="1">
    <location>
        <position position="65"/>
    </location>
</feature>